<sequence length="320" mass="33326">MRLVFAGTPEFARVALDALLAAGHDIPLVLTQPDRPAGRGLKLTPSPVKQAALAAGIEVAQPRSLRLDGRYPDDAAQAQAQLRQAAPEVMVVAAYGLILPAWTLALPPRGCLNIHASLLPRWRGAAPIQRAIEAGDTQTGVTIMQMDEGLDTGDMLLEHRVPIGAADTAAQLHDALAAAGGQAIVQALAALQAGNLPARPQPADGVTYAAKLDKAQAALDCAQPAALLARRVRAFNPVPGATLRLPGLDEPVKVWRAQALDASAAQAPGSVLRAGPEGIDIATGSGVLRLLELQKAGGKRQPVDVFVRGWQPPAHPLKSE</sequence>
<accession>A9IFQ1</accession>
<protein>
    <recommendedName>
        <fullName evidence="1">Methionyl-tRNA formyltransferase</fullName>
        <ecNumber evidence="1">2.1.2.9</ecNumber>
    </recommendedName>
</protein>
<keyword id="KW-0648">Protein biosynthesis</keyword>
<keyword id="KW-0808">Transferase</keyword>
<dbReference type="EC" id="2.1.2.9" evidence="1"/>
<dbReference type="EMBL" id="AM902716">
    <property type="protein sequence ID" value="CAP45078.1"/>
    <property type="molecule type" value="Genomic_DNA"/>
</dbReference>
<dbReference type="SMR" id="A9IFQ1"/>
<dbReference type="STRING" id="94624.Bpet4726"/>
<dbReference type="KEGG" id="bpt:Bpet4726"/>
<dbReference type="eggNOG" id="COG0223">
    <property type="taxonomic scope" value="Bacteria"/>
</dbReference>
<dbReference type="Proteomes" id="UP000001225">
    <property type="component" value="Chromosome"/>
</dbReference>
<dbReference type="GO" id="GO:0005829">
    <property type="term" value="C:cytosol"/>
    <property type="evidence" value="ECO:0007669"/>
    <property type="project" value="TreeGrafter"/>
</dbReference>
<dbReference type="GO" id="GO:0004479">
    <property type="term" value="F:methionyl-tRNA formyltransferase activity"/>
    <property type="evidence" value="ECO:0007669"/>
    <property type="project" value="UniProtKB-UniRule"/>
</dbReference>
<dbReference type="CDD" id="cd08646">
    <property type="entry name" value="FMT_core_Met-tRNA-FMT_N"/>
    <property type="match status" value="1"/>
</dbReference>
<dbReference type="CDD" id="cd08704">
    <property type="entry name" value="Met_tRNA_FMT_C"/>
    <property type="match status" value="1"/>
</dbReference>
<dbReference type="Gene3D" id="3.10.25.10">
    <property type="entry name" value="Formyl transferase, C-terminal domain"/>
    <property type="match status" value="1"/>
</dbReference>
<dbReference type="Gene3D" id="3.40.50.170">
    <property type="entry name" value="Formyl transferase, N-terminal domain"/>
    <property type="match status" value="1"/>
</dbReference>
<dbReference type="HAMAP" id="MF_00182">
    <property type="entry name" value="Formyl_trans"/>
    <property type="match status" value="1"/>
</dbReference>
<dbReference type="InterPro" id="IPR005794">
    <property type="entry name" value="Fmt"/>
</dbReference>
<dbReference type="InterPro" id="IPR005793">
    <property type="entry name" value="Formyl_trans_C"/>
</dbReference>
<dbReference type="InterPro" id="IPR037022">
    <property type="entry name" value="Formyl_trans_C_sf"/>
</dbReference>
<dbReference type="InterPro" id="IPR002376">
    <property type="entry name" value="Formyl_transf_N"/>
</dbReference>
<dbReference type="InterPro" id="IPR036477">
    <property type="entry name" value="Formyl_transf_N_sf"/>
</dbReference>
<dbReference type="InterPro" id="IPR011034">
    <property type="entry name" value="Formyl_transferase-like_C_sf"/>
</dbReference>
<dbReference type="InterPro" id="IPR001555">
    <property type="entry name" value="GART_AS"/>
</dbReference>
<dbReference type="InterPro" id="IPR044135">
    <property type="entry name" value="Met-tRNA-FMT_C"/>
</dbReference>
<dbReference type="InterPro" id="IPR041711">
    <property type="entry name" value="Met-tRNA-FMT_N"/>
</dbReference>
<dbReference type="NCBIfam" id="TIGR00460">
    <property type="entry name" value="fmt"/>
    <property type="match status" value="1"/>
</dbReference>
<dbReference type="PANTHER" id="PTHR11138">
    <property type="entry name" value="METHIONYL-TRNA FORMYLTRANSFERASE"/>
    <property type="match status" value="1"/>
</dbReference>
<dbReference type="PANTHER" id="PTHR11138:SF5">
    <property type="entry name" value="METHIONYL-TRNA FORMYLTRANSFERASE, MITOCHONDRIAL"/>
    <property type="match status" value="1"/>
</dbReference>
<dbReference type="Pfam" id="PF02911">
    <property type="entry name" value="Formyl_trans_C"/>
    <property type="match status" value="1"/>
</dbReference>
<dbReference type="Pfam" id="PF00551">
    <property type="entry name" value="Formyl_trans_N"/>
    <property type="match status" value="1"/>
</dbReference>
<dbReference type="SUPFAM" id="SSF50486">
    <property type="entry name" value="FMT C-terminal domain-like"/>
    <property type="match status" value="1"/>
</dbReference>
<dbReference type="SUPFAM" id="SSF53328">
    <property type="entry name" value="Formyltransferase"/>
    <property type="match status" value="1"/>
</dbReference>
<dbReference type="PROSITE" id="PS00373">
    <property type="entry name" value="GART"/>
    <property type="match status" value="1"/>
</dbReference>
<proteinExistence type="inferred from homology"/>
<evidence type="ECO:0000255" key="1">
    <source>
        <dbReference type="HAMAP-Rule" id="MF_00182"/>
    </source>
</evidence>
<comment type="function">
    <text evidence="1">Attaches a formyl group to the free amino group of methionyl-tRNA(fMet). The formyl group appears to play a dual role in the initiator identity of N-formylmethionyl-tRNA by promoting its recognition by IF2 and preventing the misappropriation of this tRNA by the elongation apparatus.</text>
</comment>
<comment type="catalytic activity">
    <reaction evidence="1">
        <text>L-methionyl-tRNA(fMet) + (6R)-10-formyltetrahydrofolate = N-formyl-L-methionyl-tRNA(fMet) + (6S)-5,6,7,8-tetrahydrofolate + H(+)</text>
        <dbReference type="Rhea" id="RHEA:24380"/>
        <dbReference type="Rhea" id="RHEA-COMP:9952"/>
        <dbReference type="Rhea" id="RHEA-COMP:9953"/>
        <dbReference type="ChEBI" id="CHEBI:15378"/>
        <dbReference type="ChEBI" id="CHEBI:57453"/>
        <dbReference type="ChEBI" id="CHEBI:78530"/>
        <dbReference type="ChEBI" id="CHEBI:78844"/>
        <dbReference type="ChEBI" id="CHEBI:195366"/>
        <dbReference type="EC" id="2.1.2.9"/>
    </reaction>
</comment>
<comment type="similarity">
    <text evidence="1">Belongs to the Fmt family.</text>
</comment>
<gene>
    <name evidence="1" type="primary">fmt</name>
    <name type="ordered locus">Bpet4726</name>
</gene>
<feature type="chain" id="PRO_1000098380" description="Methionyl-tRNA formyltransferase">
    <location>
        <begin position="1"/>
        <end position="320"/>
    </location>
</feature>
<feature type="binding site" evidence="1">
    <location>
        <begin position="117"/>
        <end position="120"/>
    </location>
    <ligand>
        <name>(6S)-5,6,7,8-tetrahydrofolate</name>
        <dbReference type="ChEBI" id="CHEBI:57453"/>
    </ligand>
</feature>
<reference key="1">
    <citation type="journal article" date="2008" name="BMC Genomics">
        <title>The missing link: Bordetella petrii is endowed with both the metabolic versatility of environmental bacteria and virulence traits of pathogenic Bordetellae.</title>
        <authorList>
            <person name="Gross R."/>
            <person name="Guzman C.A."/>
            <person name="Sebaihia M."/>
            <person name="Martin dos Santos V.A.P."/>
            <person name="Pieper D.H."/>
            <person name="Koebnik R."/>
            <person name="Lechner M."/>
            <person name="Bartels D."/>
            <person name="Buhrmester J."/>
            <person name="Choudhuri J.V."/>
            <person name="Ebensen T."/>
            <person name="Gaigalat L."/>
            <person name="Herrmann S."/>
            <person name="Khachane A.N."/>
            <person name="Larisch C."/>
            <person name="Link S."/>
            <person name="Linke B."/>
            <person name="Meyer F."/>
            <person name="Mormann S."/>
            <person name="Nakunst D."/>
            <person name="Rueckert C."/>
            <person name="Schneiker-Bekel S."/>
            <person name="Schulze K."/>
            <person name="Voerholter F.-J."/>
            <person name="Yevsa T."/>
            <person name="Engle J.T."/>
            <person name="Goldman W.E."/>
            <person name="Puehler A."/>
            <person name="Goebel U.B."/>
            <person name="Goesmann A."/>
            <person name="Bloecker H."/>
            <person name="Kaiser O."/>
            <person name="Martinez-Arias R."/>
        </authorList>
    </citation>
    <scope>NUCLEOTIDE SEQUENCE [LARGE SCALE GENOMIC DNA]</scope>
    <source>
        <strain>ATCC BAA-461 / DSM 12804 / CCUG 43448</strain>
    </source>
</reference>
<name>FMT_BORPD</name>
<organism>
    <name type="scientific">Bordetella petrii (strain ATCC BAA-461 / DSM 12804 / CCUG 43448)</name>
    <dbReference type="NCBI Taxonomy" id="340100"/>
    <lineage>
        <taxon>Bacteria</taxon>
        <taxon>Pseudomonadati</taxon>
        <taxon>Pseudomonadota</taxon>
        <taxon>Betaproteobacteria</taxon>
        <taxon>Burkholderiales</taxon>
        <taxon>Alcaligenaceae</taxon>
        <taxon>Bordetella</taxon>
    </lineage>
</organism>